<name>YVBK_BACSU</name>
<organism>
    <name type="scientific">Bacillus subtilis (strain 168)</name>
    <dbReference type="NCBI Taxonomy" id="224308"/>
    <lineage>
        <taxon>Bacteria</taxon>
        <taxon>Bacillati</taxon>
        <taxon>Bacillota</taxon>
        <taxon>Bacilli</taxon>
        <taxon>Bacillales</taxon>
        <taxon>Bacillaceae</taxon>
        <taxon>Bacillus</taxon>
    </lineage>
</organism>
<reference key="1">
    <citation type="journal article" date="1997" name="Nature">
        <title>The complete genome sequence of the Gram-positive bacterium Bacillus subtilis.</title>
        <authorList>
            <person name="Kunst F."/>
            <person name="Ogasawara N."/>
            <person name="Moszer I."/>
            <person name="Albertini A.M."/>
            <person name="Alloni G."/>
            <person name="Azevedo V."/>
            <person name="Bertero M.G."/>
            <person name="Bessieres P."/>
            <person name="Bolotin A."/>
            <person name="Borchert S."/>
            <person name="Borriss R."/>
            <person name="Boursier L."/>
            <person name="Brans A."/>
            <person name="Braun M."/>
            <person name="Brignell S.C."/>
            <person name="Bron S."/>
            <person name="Brouillet S."/>
            <person name="Bruschi C.V."/>
            <person name="Caldwell B."/>
            <person name="Capuano V."/>
            <person name="Carter N.M."/>
            <person name="Choi S.-K."/>
            <person name="Codani J.-J."/>
            <person name="Connerton I.F."/>
            <person name="Cummings N.J."/>
            <person name="Daniel R.A."/>
            <person name="Denizot F."/>
            <person name="Devine K.M."/>
            <person name="Duesterhoeft A."/>
            <person name="Ehrlich S.D."/>
            <person name="Emmerson P.T."/>
            <person name="Entian K.-D."/>
            <person name="Errington J."/>
            <person name="Fabret C."/>
            <person name="Ferrari E."/>
            <person name="Foulger D."/>
            <person name="Fritz C."/>
            <person name="Fujita M."/>
            <person name="Fujita Y."/>
            <person name="Fuma S."/>
            <person name="Galizzi A."/>
            <person name="Galleron N."/>
            <person name="Ghim S.-Y."/>
            <person name="Glaser P."/>
            <person name="Goffeau A."/>
            <person name="Golightly E.J."/>
            <person name="Grandi G."/>
            <person name="Guiseppi G."/>
            <person name="Guy B.J."/>
            <person name="Haga K."/>
            <person name="Haiech J."/>
            <person name="Harwood C.R."/>
            <person name="Henaut A."/>
            <person name="Hilbert H."/>
            <person name="Holsappel S."/>
            <person name="Hosono S."/>
            <person name="Hullo M.-F."/>
            <person name="Itaya M."/>
            <person name="Jones L.-M."/>
            <person name="Joris B."/>
            <person name="Karamata D."/>
            <person name="Kasahara Y."/>
            <person name="Klaerr-Blanchard M."/>
            <person name="Klein C."/>
            <person name="Kobayashi Y."/>
            <person name="Koetter P."/>
            <person name="Koningstein G."/>
            <person name="Krogh S."/>
            <person name="Kumano M."/>
            <person name="Kurita K."/>
            <person name="Lapidus A."/>
            <person name="Lardinois S."/>
            <person name="Lauber J."/>
            <person name="Lazarevic V."/>
            <person name="Lee S.-M."/>
            <person name="Levine A."/>
            <person name="Liu H."/>
            <person name="Masuda S."/>
            <person name="Mauel C."/>
            <person name="Medigue C."/>
            <person name="Medina N."/>
            <person name="Mellado R.P."/>
            <person name="Mizuno M."/>
            <person name="Moestl D."/>
            <person name="Nakai S."/>
            <person name="Noback M."/>
            <person name="Noone D."/>
            <person name="O'Reilly M."/>
            <person name="Ogawa K."/>
            <person name="Ogiwara A."/>
            <person name="Oudega B."/>
            <person name="Park S.-H."/>
            <person name="Parro V."/>
            <person name="Pohl T.M."/>
            <person name="Portetelle D."/>
            <person name="Porwollik S."/>
            <person name="Prescott A.M."/>
            <person name="Presecan E."/>
            <person name="Pujic P."/>
            <person name="Purnelle B."/>
            <person name="Rapoport G."/>
            <person name="Rey M."/>
            <person name="Reynolds S."/>
            <person name="Rieger M."/>
            <person name="Rivolta C."/>
            <person name="Rocha E."/>
            <person name="Roche B."/>
            <person name="Rose M."/>
            <person name="Sadaie Y."/>
            <person name="Sato T."/>
            <person name="Scanlan E."/>
            <person name="Schleich S."/>
            <person name="Schroeter R."/>
            <person name="Scoffone F."/>
            <person name="Sekiguchi J."/>
            <person name="Sekowska A."/>
            <person name="Seror S.J."/>
            <person name="Serror P."/>
            <person name="Shin B.-S."/>
            <person name="Soldo B."/>
            <person name="Sorokin A."/>
            <person name="Tacconi E."/>
            <person name="Takagi T."/>
            <person name="Takahashi H."/>
            <person name="Takemaru K."/>
            <person name="Takeuchi M."/>
            <person name="Tamakoshi A."/>
            <person name="Tanaka T."/>
            <person name="Terpstra P."/>
            <person name="Tognoni A."/>
            <person name="Tosato V."/>
            <person name="Uchiyama S."/>
            <person name="Vandenbol M."/>
            <person name="Vannier F."/>
            <person name="Vassarotti A."/>
            <person name="Viari A."/>
            <person name="Wambutt R."/>
            <person name="Wedler E."/>
            <person name="Wedler H."/>
            <person name="Weitzenegger T."/>
            <person name="Winters P."/>
            <person name="Wipat A."/>
            <person name="Yamamoto H."/>
            <person name="Yamane K."/>
            <person name="Yasumoto K."/>
            <person name="Yata K."/>
            <person name="Yoshida K."/>
            <person name="Yoshikawa H.-F."/>
            <person name="Zumstein E."/>
            <person name="Yoshikawa H."/>
            <person name="Danchin A."/>
        </authorList>
    </citation>
    <scope>NUCLEOTIDE SEQUENCE [LARGE SCALE GENOMIC DNA]</scope>
    <source>
        <strain>168</strain>
    </source>
</reference>
<reference key="2">
    <citation type="submission" date="2005-04" db="PDB data bank">
        <title>Crystal structure of the Bacillis subtilis acetyltransferase in complex with CoA, northeast structural genomics target SR237.</title>
        <authorList>
            <consortium name="Northeast structural genomics consortium (NESG)"/>
        </authorList>
    </citation>
    <scope>X-RAY CRYSTALLOGRAPHY (3.01 ANGSTROMS) IN COMPLEX WITH COENZYME A</scope>
    <source>
        <strain>168</strain>
    </source>
</reference>
<keyword id="KW-0002">3D-structure</keyword>
<keyword id="KW-0012">Acyltransferase</keyword>
<keyword id="KW-1185">Reference proteome</keyword>
<keyword id="KW-0808">Transferase</keyword>
<comment type="function">
    <text>Probable N-acetyltransferase.</text>
</comment>
<evidence type="ECO:0000255" key="1">
    <source>
        <dbReference type="PROSITE-ProRule" id="PRU00532"/>
    </source>
</evidence>
<evidence type="ECO:0007829" key="2">
    <source>
        <dbReference type="PDB" id="1YVK"/>
    </source>
</evidence>
<dbReference type="EC" id="2.3.1.-"/>
<dbReference type="EMBL" id="AL009126">
    <property type="protein sequence ID" value="CAB15394.1"/>
    <property type="molecule type" value="Genomic_DNA"/>
</dbReference>
<dbReference type="PIR" id="B70030">
    <property type="entry name" value="B70030"/>
</dbReference>
<dbReference type="RefSeq" id="NP_391269.1">
    <property type="nucleotide sequence ID" value="NC_000964.3"/>
</dbReference>
<dbReference type="RefSeq" id="WP_003228335.1">
    <property type="nucleotide sequence ID" value="NZ_OZ025638.1"/>
</dbReference>
<dbReference type="PDB" id="1YVK">
    <property type="method" value="X-ray"/>
    <property type="resolution" value="3.01 A"/>
    <property type="chains" value="A/B/C/D=1-155"/>
</dbReference>
<dbReference type="PDBsum" id="1YVK"/>
<dbReference type="SMR" id="O32248"/>
<dbReference type="FunCoup" id="O32248">
    <property type="interactions" value="2"/>
</dbReference>
<dbReference type="STRING" id="224308.BSU33890"/>
<dbReference type="DrugBank" id="DB01992">
    <property type="generic name" value="Coenzyme A"/>
</dbReference>
<dbReference type="jPOST" id="O32248"/>
<dbReference type="PaxDb" id="224308-BSU33890"/>
<dbReference type="EnsemblBacteria" id="CAB15394">
    <property type="protein sequence ID" value="CAB15394"/>
    <property type="gene ID" value="BSU_33890"/>
</dbReference>
<dbReference type="GeneID" id="938642"/>
<dbReference type="KEGG" id="bsu:BSU33890"/>
<dbReference type="PATRIC" id="fig|224308.43.peg.3552"/>
<dbReference type="eggNOG" id="COG0456">
    <property type="taxonomic scope" value="Bacteria"/>
</dbReference>
<dbReference type="InParanoid" id="O32248"/>
<dbReference type="OrthoDB" id="162775at2"/>
<dbReference type="PhylomeDB" id="O32248"/>
<dbReference type="BioCyc" id="BSUB:BSU33890-MONOMER"/>
<dbReference type="EvolutionaryTrace" id="O32248"/>
<dbReference type="Proteomes" id="UP000001570">
    <property type="component" value="Chromosome"/>
</dbReference>
<dbReference type="GO" id="GO:0016747">
    <property type="term" value="F:acyltransferase activity, transferring groups other than amino-acyl groups"/>
    <property type="evidence" value="ECO:0007669"/>
    <property type="project" value="InterPro"/>
</dbReference>
<dbReference type="CDD" id="cd04301">
    <property type="entry name" value="NAT_SF"/>
    <property type="match status" value="1"/>
</dbReference>
<dbReference type="Gene3D" id="3.40.630.30">
    <property type="match status" value="1"/>
</dbReference>
<dbReference type="InterPro" id="IPR016181">
    <property type="entry name" value="Acyl_CoA_acyltransferase"/>
</dbReference>
<dbReference type="InterPro" id="IPR000182">
    <property type="entry name" value="GNAT_dom"/>
</dbReference>
<dbReference type="Pfam" id="PF00583">
    <property type="entry name" value="Acetyltransf_1"/>
    <property type="match status" value="1"/>
</dbReference>
<dbReference type="SUPFAM" id="SSF55729">
    <property type="entry name" value="Acyl-CoA N-acyltransferases (Nat)"/>
    <property type="match status" value="1"/>
</dbReference>
<dbReference type="PROSITE" id="PS51186">
    <property type="entry name" value="GNAT"/>
    <property type="match status" value="1"/>
</dbReference>
<proteinExistence type="evidence at protein level"/>
<feature type="chain" id="PRO_0000359974" description="Uncharacterized N-acetyltransferase YvbK">
    <location>
        <begin position="1"/>
        <end position="155"/>
    </location>
</feature>
<feature type="domain" description="N-acetyltransferase" evidence="1">
    <location>
        <begin position="6"/>
        <end position="155"/>
    </location>
</feature>
<feature type="binding site">
    <location>
        <begin position="69"/>
        <end position="71"/>
    </location>
    <ligand>
        <name>CoA</name>
        <dbReference type="ChEBI" id="CHEBI:57287"/>
    </ligand>
</feature>
<feature type="binding site">
    <location>
        <begin position="77"/>
        <end position="82"/>
    </location>
    <ligand>
        <name>CoA</name>
        <dbReference type="ChEBI" id="CHEBI:57287"/>
    </ligand>
</feature>
<feature type="binding site">
    <location>
        <begin position="111"/>
        <end position="117"/>
    </location>
    <ligand>
        <name>CoA</name>
        <dbReference type="ChEBI" id="CHEBI:57287"/>
    </ligand>
</feature>
<feature type="strand" evidence="2">
    <location>
        <begin position="7"/>
        <end position="10"/>
    </location>
</feature>
<feature type="helix" evidence="2">
    <location>
        <begin position="16"/>
        <end position="25"/>
    </location>
</feature>
<feature type="helix" evidence="2">
    <location>
        <begin position="29"/>
        <end position="38"/>
    </location>
</feature>
<feature type="strand" evidence="2">
    <location>
        <begin position="39"/>
        <end position="46"/>
    </location>
</feature>
<feature type="strand" evidence="2">
    <location>
        <begin position="49"/>
        <end position="58"/>
    </location>
</feature>
<feature type="strand" evidence="2">
    <location>
        <begin position="63"/>
        <end position="71"/>
    </location>
</feature>
<feature type="helix" evidence="2">
    <location>
        <begin position="73"/>
        <end position="75"/>
    </location>
</feature>
<feature type="helix" evidence="2">
    <location>
        <begin position="80"/>
        <end position="94"/>
    </location>
</feature>
<feature type="strand" evidence="2">
    <location>
        <begin position="98"/>
        <end position="105"/>
    </location>
</feature>
<feature type="helix" evidence="2">
    <location>
        <begin position="109"/>
        <end position="117"/>
    </location>
</feature>
<feature type="strand" evidence="2">
    <location>
        <begin position="121"/>
        <end position="126"/>
    </location>
</feature>
<feature type="helix" evidence="2">
    <location>
        <begin position="129"/>
        <end position="132"/>
    </location>
</feature>
<feature type="strand" evidence="2">
    <location>
        <begin position="138"/>
        <end position="140"/>
    </location>
</feature>
<feature type="strand" evidence="2">
    <location>
        <begin position="143"/>
        <end position="145"/>
    </location>
</feature>
<feature type="strand" evidence="2">
    <location>
        <begin position="148"/>
        <end position="154"/>
    </location>
</feature>
<accession>O32248</accession>
<protein>
    <recommendedName>
        <fullName>Uncharacterized N-acetyltransferase YvbK</fullName>
        <ecNumber>2.3.1.-</ecNumber>
    </recommendedName>
</protein>
<gene>
    <name type="primary">yvbK</name>
    <name type="ordered locus">BSU33890</name>
</gene>
<sequence length="155" mass="17745">MNMQKLRIELGEETNDELYDLLLLADPSKDIVDEYLERGECYTAWAGDELAGVYVLLKTRPQTVEIVNIAVKESLQKKGFGKQLVLDAIEKAKKLGADTIEIGTGNSSIHQLSLYQKCGFRIQAIDHDFFLRHYDEDIFENGIQCRDMVRLYLDL</sequence>